<organism>
    <name type="scientific">Escherichia coli O6:K15:H31 (strain 536 / UPEC)</name>
    <dbReference type="NCBI Taxonomy" id="362663"/>
    <lineage>
        <taxon>Bacteria</taxon>
        <taxon>Pseudomonadati</taxon>
        <taxon>Pseudomonadota</taxon>
        <taxon>Gammaproteobacteria</taxon>
        <taxon>Enterobacterales</taxon>
        <taxon>Enterobacteriaceae</taxon>
        <taxon>Escherichia</taxon>
    </lineage>
</organism>
<accession>Q0THJ1</accession>
<protein>
    <recommendedName>
        <fullName evidence="1">Pyridoxal kinase PdxY</fullName>
        <shortName evidence="1">PL kinase</shortName>
        <ecNumber evidence="1">2.7.1.35</ecNumber>
    </recommendedName>
</protein>
<comment type="function">
    <text evidence="1">Pyridoxal kinase involved in the salvage pathway of pyridoxal 5'-phosphate (PLP). Catalyzes the phosphorylation of pyridoxal to PLP.</text>
</comment>
<comment type="catalytic activity">
    <reaction evidence="1">
        <text>pyridoxal + ATP = pyridoxal 5'-phosphate + ADP + H(+)</text>
        <dbReference type="Rhea" id="RHEA:10224"/>
        <dbReference type="ChEBI" id="CHEBI:15378"/>
        <dbReference type="ChEBI" id="CHEBI:17310"/>
        <dbReference type="ChEBI" id="CHEBI:30616"/>
        <dbReference type="ChEBI" id="CHEBI:456216"/>
        <dbReference type="ChEBI" id="CHEBI:597326"/>
        <dbReference type="EC" id="2.7.1.35"/>
    </reaction>
</comment>
<comment type="cofactor">
    <cofactor evidence="1">
        <name>Mg(2+)</name>
        <dbReference type="ChEBI" id="CHEBI:18420"/>
    </cofactor>
</comment>
<comment type="pathway">
    <text evidence="1">Cofactor metabolism; pyridoxal 5'-phosphate salvage; pyridoxal 5'-phosphate from pyridoxal: step 1/1.</text>
</comment>
<comment type="subunit">
    <text evidence="1">Homodimer.</text>
</comment>
<comment type="similarity">
    <text evidence="1">Belongs to the pyridoxine kinase family. PdxY subfamily.</text>
</comment>
<comment type="sequence caution" evidence="2">
    <conflict type="erroneous initiation">
        <sequence resource="EMBL-CDS" id="ABG69588"/>
    </conflict>
</comment>
<feature type="chain" id="PRO_0000269810" description="Pyridoxal kinase PdxY">
    <location>
        <begin position="1"/>
        <end position="287"/>
    </location>
</feature>
<feature type="binding site" evidence="1">
    <location>
        <position position="10"/>
    </location>
    <ligand>
        <name>substrate</name>
    </ligand>
</feature>
<feature type="binding site" evidence="1">
    <location>
        <begin position="45"/>
        <end position="46"/>
    </location>
    <ligand>
        <name>substrate</name>
    </ligand>
</feature>
<feature type="binding site" evidence="1">
    <location>
        <position position="112"/>
    </location>
    <ligand>
        <name>ATP</name>
        <dbReference type="ChEBI" id="CHEBI:30616"/>
    </ligand>
</feature>
<feature type="binding site" evidence="1">
    <location>
        <position position="144"/>
    </location>
    <ligand>
        <name>ATP</name>
        <dbReference type="ChEBI" id="CHEBI:30616"/>
    </ligand>
</feature>
<feature type="binding site" evidence="1">
    <location>
        <position position="149"/>
    </location>
    <ligand>
        <name>ATP</name>
        <dbReference type="ChEBI" id="CHEBI:30616"/>
    </ligand>
</feature>
<feature type="binding site" evidence="1">
    <location>
        <position position="182"/>
    </location>
    <ligand>
        <name>ATP</name>
        <dbReference type="ChEBI" id="CHEBI:30616"/>
    </ligand>
</feature>
<feature type="binding site" evidence="1">
    <location>
        <begin position="209"/>
        <end position="212"/>
    </location>
    <ligand>
        <name>ATP</name>
        <dbReference type="ChEBI" id="CHEBI:30616"/>
    </ligand>
</feature>
<feature type="binding site" evidence="1">
    <location>
        <position position="224"/>
    </location>
    <ligand>
        <name>substrate</name>
    </ligand>
</feature>
<reference key="1">
    <citation type="journal article" date="2006" name="Mol. Microbiol.">
        <title>Role of pathogenicity island-associated integrases in the genome plasticity of uropathogenic Escherichia coli strain 536.</title>
        <authorList>
            <person name="Hochhut B."/>
            <person name="Wilde C."/>
            <person name="Balling G."/>
            <person name="Middendorf B."/>
            <person name="Dobrindt U."/>
            <person name="Brzuszkiewicz E."/>
            <person name="Gottschalk G."/>
            <person name="Carniel E."/>
            <person name="Hacker J."/>
        </authorList>
    </citation>
    <scope>NUCLEOTIDE SEQUENCE [LARGE SCALE GENOMIC DNA]</scope>
    <source>
        <strain>536 / UPEC</strain>
    </source>
</reference>
<proteinExistence type="inferred from homology"/>
<dbReference type="EC" id="2.7.1.35" evidence="1"/>
<dbReference type="EMBL" id="CP000247">
    <property type="protein sequence ID" value="ABG69588.1"/>
    <property type="status" value="ALT_INIT"/>
    <property type="molecule type" value="Genomic_DNA"/>
</dbReference>
<dbReference type="SMR" id="Q0THJ1"/>
<dbReference type="KEGG" id="ecp:ECP_1581"/>
<dbReference type="HOGENOM" id="CLU_046496_3_0_6"/>
<dbReference type="UniPathway" id="UPA01068">
    <property type="reaction ID" value="UER00298"/>
</dbReference>
<dbReference type="Proteomes" id="UP000009182">
    <property type="component" value="Chromosome"/>
</dbReference>
<dbReference type="GO" id="GO:0005829">
    <property type="term" value="C:cytosol"/>
    <property type="evidence" value="ECO:0007669"/>
    <property type="project" value="TreeGrafter"/>
</dbReference>
<dbReference type="GO" id="GO:0005524">
    <property type="term" value="F:ATP binding"/>
    <property type="evidence" value="ECO:0007669"/>
    <property type="project" value="UniProtKB-UniRule"/>
</dbReference>
<dbReference type="GO" id="GO:0000287">
    <property type="term" value="F:magnesium ion binding"/>
    <property type="evidence" value="ECO:0007669"/>
    <property type="project" value="UniProtKB-UniRule"/>
</dbReference>
<dbReference type="GO" id="GO:0008478">
    <property type="term" value="F:pyridoxal kinase activity"/>
    <property type="evidence" value="ECO:0007669"/>
    <property type="project" value="UniProtKB-UniRule"/>
</dbReference>
<dbReference type="GO" id="GO:0009443">
    <property type="term" value="P:pyridoxal 5'-phosphate salvage"/>
    <property type="evidence" value="ECO:0007669"/>
    <property type="project" value="UniProtKB-UniRule"/>
</dbReference>
<dbReference type="CDD" id="cd01173">
    <property type="entry name" value="pyridoxal_pyridoxamine_kinase"/>
    <property type="match status" value="1"/>
</dbReference>
<dbReference type="FunFam" id="3.40.1190.20:FF:000008">
    <property type="entry name" value="Pyridoxal kinase PdxY"/>
    <property type="match status" value="1"/>
</dbReference>
<dbReference type="Gene3D" id="3.40.1190.20">
    <property type="match status" value="1"/>
</dbReference>
<dbReference type="HAMAP" id="MF_01639">
    <property type="entry name" value="PdxY"/>
    <property type="match status" value="1"/>
</dbReference>
<dbReference type="InterPro" id="IPR013749">
    <property type="entry name" value="PM/HMP-P_kinase-1"/>
</dbReference>
<dbReference type="InterPro" id="IPR004625">
    <property type="entry name" value="PyrdxlKinase"/>
</dbReference>
<dbReference type="InterPro" id="IPR023685">
    <property type="entry name" value="Pyridoxal_kinase_PdxY"/>
</dbReference>
<dbReference type="InterPro" id="IPR029056">
    <property type="entry name" value="Ribokinase-like"/>
</dbReference>
<dbReference type="NCBIfam" id="NF004398">
    <property type="entry name" value="PRK05756.1"/>
    <property type="match status" value="1"/>
</dbReference>
<dbReference type="NCBIfam" id="TIGR00687">
    <property type="entry name" value="pyridox_kin"/>
    <property type="match status" value="1"/>
</dbReference>
<dbReference type="PANTHER" id="PTHR10534">
    <property type="entry name" value="PYRIDOXAL KINASE"/>
    <property type="match status" value="1"/>
</dbReference>
<dbReference type="PANTHER" id="PTHR10534:SF2">
    <property type="entry name" value="PYRIDOXAL KINASE"/>
    <property type="match status" value="1"/>
</dbReference>
<dbReference type="Pfam" id="PF08543">
    <property type="entry name" value="Phos_pyr_kin"/>
    <property type="match status" value="1"/>
</dbReference>
<dbReference type="SUPFAM" id="SSF53613">
    <property type="entry name" value="Ribokinase-like"/>
    <property type="match status" value="1"/>
</dbReference>
<name>PDXY_ECOL5</name>
<keyword id="KW-0067">ATP-binding</keyword>
<keyword id="KW-0418">Kinase</keyword>
<keyword id="KW-0460">Magnesium</keyword>
<keyword id="KW-0547">Nucleotide-binding</keyword>
<keyword id="KW-0808">Transferase</keyword>
<gene>
    <name evidence="1" type="primary">pdxY</name>
    <name type="ordered locus">ECP_1581</name>
</gene>
<evidence type="ECO:0000255" key="1">
    <source>
        <dbReference type="HAMAP-Rule" id="MF_01639"/>
    </source>
</evidence>
<evidence type="ECO:0000305" key="2"/>
<sequence>MMKNILAIQSHVVYGHAGNSAAEFPMRRLGANVWPLNTVQFSNHTQYGKWTGCVMPPSHLTEIVQGIAAIDKLHTCDAVLSGYLGSAEQGEHILGIVRQVKAANPQAKYFCDPVMGHPEKGCIVAPGVAEFHVRHGLPASDIIAPNLVELEILCEHPVNNVEEAVLAARELIAQGPQIVLVKHLARAGYSRDRFEMLLVTADEAWHISRPLVDFGMRQPVGVGDVTSGLLLVKLLQGATLQEALEHVTAAVYEIMVTTKAMQEYELQVVAAQDRIANPEHYFSATKL</sequence>